<dbReference type="EC" id="1.8.4.11" evidence="1"/>
<dbReference type="EMBL" id="CP001048">
    <property type="protein sequence ID" value="ACC87467.1"/>
    <property type="molecule type" value="Genomic_DNA"/>
</dbReference>
<dbReference type="RefSeq" id="WP_002210165.1">
    <property type="nucleotide sequence ID" value="NZ_CP009780.1"/>
</dbReference>
<dbReference type="SMR" id="B2K2M6"/>
<dbReference type="GeneID" id="57975189"/>
<dbReference type="KEGG" id="ypb:YPTS_0481"/>
<dbReference type="PATRIC" id="fig|502801.10.peg.4154"/>
<dbReference type="GO" id="GO:0005737">
    <property type="term" value="C:cytoplasm"/>
    <property type="evidence" value="ECO:0007669"/>
    <property type="project" value="TreeGrafter"/>
</dbReference>
<dbReference type="GO" id="GO:0036456">
    <property type="term" value="F:L-methionine-(S)-S-oxide reductase activity"/>
    <property type="evidence" value="ECO:0007669"/>
    <property type="project" value="TreeGrafter"/>
</dbReference>
<dbReference type="GO" id="GO:0008113">
    <property type="term" value="F:peptide-methionine (S)-S-oxide reductase activity"/>
    <property type="evidence" value="ECO:0007669"/>
    <property type="project" value="UniProtKB-UniRule"/>
</dbReference>
<dbReference type="GO" id="GO:0034599">
    <property type="term" value="P:cellular response to oxidative stress"/>
    <property type="evidence" value="ECO:0007669"/>
    <property type="project" value="TreeGrafter"/>
</dbReference>
<dbReference type="GO" id="GO:0036211">
    <property type="term" value="P:protein modification process"/>
    <property type="evidence" value="ECO:0007669"/>
    <property type="project" value="UniProtKB-UniRule"/>
</dbReference>
<dbReference type="FunFam" id="3.30.1060.10:FF:000001">
    <property type="entry name" value="Peptide methionine sulfoxide reductase MsrA"/>
    <property type="match status" value="1"/>
</dbReference>
<dbReference type="Gene3D" id="3.30.1060.10">
    <property type="entry name" value="Peptide methionine sulphoxide reductase MsrA"/>
    <property type="match status" value="1"/>
</dbReference>
<dbReference type="HAMAP" id="MF_01401">
    <property type="entry name" value="MsrA"/>
    <property type="match status" value="1"/>
</dbReference>
<dbReference type="InterPro" id="IPR002569">
    <property type="entry name" value="Met_Sox_Rdtase_MsrA_dom"/>
</dbReference>
<dbReference type="InterPro" id="IPR036509">
    <property type="entry name" value="Met_Sox_Rdtase_MsrA_sf"/>
</dbReference>
<dbReference type="InterPro" id="IPR050162">
    <property type="entry name" value="MsrA_MetSO_reductase"/>
</dbReference>
<dbReference type="NCBIfam" id="TIGR00401">
    <property type="entry name" value="msrA"/>
    <property type="match status" value="1"/>
</dbReference>
<dbReference type="PANTHER" id="PTHR42799">
    <property type="entry name" value="MITOCHONDRIAL PEPTIDE METHIONINE SULFOXIDE REDUCTASE"/>
    <property type="match status" value="1"/>
</dbReference>
<dbReference type="PANTHER" id="PTHR42799:SF2">
    <property type="entry name" value="MITOCHONDRIAL PEPTIDE METHIONINE SULFOXIDE REDUCTASE"/>
    <property type="match status" value="1"/>
</dbReference>
<dbReference type="Pfam" id="PF01625">
    <property type="entry name" value="PMSR"/>
    <property type="match status" value="1"/>
</dbReference>
<dbReference type="SUPFAM" id="SSF55068">
    <property type="entry name" value="Peptide methionine sulfoxide reductase"/>
    <property type="match status" value="1"/>
</dbReference>
<organism>
    <name type="scientific">Yersinia pseudotuberculosis serotype IB (strain PB1/+)</name>
    <dbReference type="NCBI Taxonomy" id="502801"/>
    <lineage>
        <taxon>Bacteria</taxon>
        <taxon>Pseudomonadati</taxon>
        <taxon>Pseudomonadota</taxon>
        <taxon>Gammaproteobacteria</taxon>
        <taxon>Enterobacterales</taxon>
        <taxon>Yersiniaceae</taxon>
        <taxon>Yersinia</taxon>
    </lineage>
</organism>
<name>MSRA_YERPB</name>
<proteinExistence type="inferred from homology"/>
<comment type="function">
    <text evidence="1">Has an important function as a repair enzyme for proteins that have been inactivated by oxidation. Catalyzes the reversible oxidation-reduction of methionine sulfoxide in proteins to methionine.</text>
</comment>
<comment type="catalytic activity">
    <reaction evidence="1">
        <text>L-methionyl-[protein] + [thioredoxin]-disulfide + H2O = L-methionyl-(S)-S-oxide-[protein] + [thioredoxin]-dithiol</text>
        <dbReference type="Rhea" id="RHEA:14217"/>
        <dbReference type="Rhea" id="RHEA-COMP:10698"/>
        <dbReference type="Rhea" id="RHEA-COMP:10700"/>
        <dbReference type="Rhea" id="RHEA-COMP:12313"/>
        <dbReference type="Rhea" id="RHEA-COMP:12315"/>
        <dbReference type="ChEBI" id="CHEBI:15377"/>
        <dbReference type="ChEBI" id="CHEBI:16044"/>
        <dbReference type="ChEBI" id="CHEBI:29950"/>
        <dbReference type="ChEBI" id="CHEBI:44120"/>
        <dbReference type="ChEBI" id="CHEBI:50058"/>
        <dbReference type="EC" id="1.8.4.11"/>
    </reaction>
</comment>
<comment type="catalytic activity">
    <reaction evidence="1">
        <text>[thioredoxin]-disulfide + L-methionine + H2O = L-methionine (S)-S-oxide + [thioredoxin]-dithiol</text>
        <dbReference type="Rhea" id="RHEA:19993"/>
        <dbReference type="Rhea" id="RHEA-COMP:10698"/>
        <dbReference type="Rhea" id="RHEA-COMP:10700"/>
        <dbReference type="ChEBI" id="CHEBI:15377"/>
        <dbReference type="ChEBI" id="CHEBI:29950"/>
        <dbReference type="ChEBI" id="CHEBI:50058"/>
        <dbReference type="ChEBI" id="CHEBI:57844"/>
        <dbReference type="ChEBI" id="CHEBI:58772"/>
        <dbReference type="EC" id="1.8.4.11"/>
    </reaction>
</comment>
<comment type="similarity">
    <text evidence="1">Belongs to the MsrA Met sulfoxide reductase family.</text>
</comment>
<accession>B2K2M6</accession>
<gene>
    <name evidence="1" type="primary">msrA</name>
    <name type="ordered locus">YPTS_0481</name>
</gene>
<reference key="1">
    <citation type="submission" date="2008-04" db="EMBL/GenBank/DDBJ databases">
        <title>Complete sequence of Yersinia pseudotuberculosis PB1/+.</title>
        <authorList>
            <person name="Copeland A."/>
            <person name="Lucas S."/>
            <person name="Lapidus A."/>
            <person name="Glavina del Rio T."/>
            <person name="Dalin E."/>
            <person name="Tice H."/>
            <person name="Bruce D."/>
            <person name="Goodwin L."/>
            <person name="Pitluck S."/>
            <person name="Munk A.C."/>
            <person name="Brettin T."/>
            <person name="Detter J.C."/>
            <person name="Han C."/>
            <person name="Tapia R."/>
            <person name="Schmutz J."/>
            <person name="Larimer F."/>
            <person name="Land M."/>
            <person name="Hauser L."/>
            <person name="Challacombe J.F."/>
            <person name="Green L."/>
            <person name="Lindler L.E."/>
            <person name="Nikolich M.P."/>
            <person name="Richardson P."/>
        </authorList>
    </citation>
    <scope>NUCLEOTIDE SEQUENCE [LARGE SCALE GENOMIC DNA]</scope>
    <source>
        <strain>PB1/+</strain>
    </source>
</reference>
<feature type="chain" id="PRO_1000145447" description="Peptide methionine sulfoxide reductase MsrA">
    <location>
        <begin position="1"/>
        <end position="212"/>
    </location>
</feature>
<feature type="active site" evidence="1">
    <location>
        <position position="52"/>
    </location>
</feature>
<evidence type="ECO:0000255" key="1">
    <source>
        <dbReference type="HAMAP-Rule" id="MF_01401"/>
    </source>
</evidence>
<keyword id="KW-0560">Oxidoreductase</keyword>
<protein>
    <recommendedName>
        <fullName evidence="1">Peptide methionine sulfoxide reductase MsrA</fullName>
        <shortName evidence="1">Protein-methionine-S-oxide reductase</shortName>
        <ecNumber evidence="1">1.8.4.11</ecNumber>
    </recommendedName>
    <alternativeName>
        <fullName evidence="1">Peptide-methionine (S)-S-oxide reductase</fullName>
        <shortName evidence="1">Peptide Met(O) reductase</shortName>
    </alternativeName>
</protein>
<sequence>MQNVDNTAVIDAANALPGRLTSIPVSPLHAVHGHSMTYIPEGMDLAFFAMGCFWGAERLFWQQPGVYSTAAGYSGGHTPNPTYHEVCSGRTGHAEVVRVVFDPAVISYQQLLQIFWENHDPAQGMRQGGDVGTQYRSAIYVLTPEQEEQAHKSRERFQQAMEKAGDQRVITSEITVALPFYYAEDDHQQYLHKNPHGYCGLGGIGVCLPPNV</sequence>